<gene>
    <name evidence="1" type="primary">ilvC</name>
    <name type="ordered locus">Dvul_1690</name>
</gene>
<comment type="function">
    <text evidence="1">Involved in the biosynthesis of branched-chain amino acids (BCAA). Catalyzes an alkyl-migration followed by a ketol-acid reduction of (S)-2-acetolactate (S2AL) to yield (R)-2,3-dihydroxy-isovalerate. In the isomerase reaction, S2AL is rearranged via a Mg-dependent methyl migration to produce 3-hydroxy-3-methyl-2-ketobutyrate (HMKB). In the reductase reaction, this 2-ketoacid undergoes a metal-dependent reduction by NADPH to yield (R)-2,3-dihydroxy-isovalerate.</text>
</comment>
<comment type="catalytic activity">
    <reaction evidence="1">
        <text>(2R)-2,3-dihydroxy-3-methylbutanoate + NADP(+) = (2S)-2-acetolactate + NADPH + H(+)</text>
        <dbReference type="Rhea" id="RHEA:22068"/>
        <dbReference type="ChEBI" id="CHEBI:15378"/>
        <dbReference type="ChEBI" id="CHEBI:49072"/>
        <dbReference type="ChEBI" id="CHEBI:57783"/>
        <dbReference type="ChEBI" id="CHEBI:58349"/>
        <dbReference type="ChEBI" id="CHEBI:58476"/>
        <dbReference type="EC" id="1.1.1.86"/>
    </reaction>
</comment>
<comment type="catalytic activity">
    <reaction evidence="1">
        <text>(2R,3R)-2,3-dihydroxy-3-methylpentanoate + NADP(+) = (S)-2-ethyl-2-hydroxy-3-oxobutanoate + NADPH + H(+)</text>
        <dbReference type="Rhea" id="RHEA:13493"/>
        <dbReference type="ChEBI" id="CHEBI:15378"/>
        <dbReference type="ChEBI" id="CHEBI:49256"/>
        <dbReference type="ChEBI" id="CHEBI:49258"/>
        <dbReference type="ChEBI" id="CHEBI:57783"/>
        <dbReference type="ChEBI" id="CHEBI:58349"/>
        <dbReference type="EC" id="1.1.1.86"/>
    </reaction>
</comment>
<comment type="cofactor">
    <cofactor evidence="1">
        <name>Mg(2+)</name>
        <dbReference type="ChEBI" id="CHEBI:18420"/>
    </cofactor>
    <text evidence="1">Binds 2 magnesium ions per subunit.</text>
</comment>
<comment type="pathway">
    <text evidence="1">Amino-acid biosynthesis; L-isoleucine biosynthesis; L-isoleucine from 2-oxobutanoate: step 2/4.</text>
</comment>
<comment type="pathway">
    <text evidence="1">Amino-acid biosynthesis; L-valine biosynthesis; L-valine from pyruvate: step 2/4.</text>
</comment>
<comment type="similarity">
    <text evidence="1">Belongs to the ketol-acid reductoisomerase family.</text>
</comment>
<accession>A1VE41</accession>
<feature type="chain" id="PRO_1000050505" description="Ketol-acid reductoisomerase (NADP(+))">
    <location>
        <begin position="1"/>
        <end position="331"/>
    </location>
</feature>
<feature type="domain" description="KARI N-terminal Rossmann" evidence="2">
    <location>
        <begin position="1"/>
        <end position="181"/>
    </location>
</feature>
<feature type="domain" description="KARI C-terminal knotted" evidence="3">
    <location>
        <begin position="182"/>
        <end position="327"/>
    </location>
</feature>
<feature type="active site" evidence="1">
    <location>
        <position position="107"/>
    </location>
</feature>
<feature type="binding site" evidence="1">
    <location>
        <begin position="24"/>
        <end position="27"/>
    </location>
    <ligand>
        <name>NADP(+)</name>
        <dbReference type="ChEBI" id="CHEBI:58349"/>
    </ligand>
</feature>
<feature type="binding site" evidence="1">
    <location>
        <position position="47"/>
    </location>
    <ligand>
        <name>NADP(+)</name>
        <dbReference type="ChEBI" id="CHEBI:58349"/>
    </ligand>
</feature>
<feature type="binding site" evidence="1">
    <location>
        <begin position="82"/>
        <end position="85"/>
    </location>
    <ligand>
        <name>NADP(+)</name>
        <dbReference type="ChEBI" id="CHEBI:58349"/>
    </ligand>
</feature>
<feature type="binding site" evidence="1">
    <location>
        <position position="133"/>
    </location>
    <ligand>
        <name>NADP(+)</name>
        <dbReference type="ChEBI" id="CHEBI:58349"/>
    </ligand>
</feature>
<feature type="binding site" evidence="1">
    <location>
        <position position="190"/>
    </location>
    <ligand>
        <name>Mg(2+)</name>
        <dbReference type="ChEBI" id="CHEBI:18420"/>
        <label>1</label>
    </ligand>
</feature>
<feature type="binding site" evidence="1">
    <location>
        <position position="190"/>
    </location>
    <ligand>
        <name>Mg(2+)</name>
        <dbReference type="ChEBI" id="CHEBI:18420"/>
        <label>2</label>
    </ligand>
</feature>
<feature type="binding site" evidence="1">
    <location>
        <position position="194"/>
    </location>
    <ligand>
        <name>Mg(2+)</name>
        <dbReference type="ChEBI" id="CHEBI:18420"/>
        <label>1</label>
    </ligand>
</feature>
<feature type="binding site" evidence="1">
    <location>
        <position position="226"/>
    </location>
    <ligand>
        <name>Mg(2+)</name>
        <dbReference type="ChEBI" id="CHEBI:18420"/>
        <label>2</label>
    </ligand>
</feature>
<feature type="binding site" evidence="1">
    <location>
        <position position="230"/>
    </location>
    <ligand>
        <name>Mg(2+)</name>
        <dbReference type="ChEBI" id="CHEBI:18420"/>
        <label>2</label>
    </ligand>
</feature>
<feature type="binding site" evidence="1">
    <location>
        <position position="251"/>
    </location>
    <ligand>
        <name>substrate</name>
    </ligand>
</feature>
<proteinExistence type="inferred from homology"/>
<reference key="1">
    <citation type="journal article" date="2009" name="Environ. Microbiol.">
        <title>Contribution of mobile genetic elements to Desulfovibrio vulgaris genome plasticity.</title>
        <authorList>
            <person name="Walker C.B."/>
            <person name="Stolyar S."/>
            <person name="Chivian D."/>
            <person name="Pinel N."/>
            <person name="Gabster J.A."/>
            <person name="Dehal P.S."/>
            <person name="He Z."/>
            <person name="Yang Z.K."/>
            <person name="Yen H.C."/>
            <person name="Zhou J."/>
            <person name="Wall J.D."/>
            <person name="Hazen T.C."/>
            <person name="Arkin A.P."/>
            <person name="Stahl D.A."/>
        </authorList>
    </citation>
    <scope>NUCLEOTIDE SEQUENCE [LARGE SCALE GENOMIC DNA]</scope>
    <source>
        <strain>DP4</strain>
    </source>
</reference>
<evidence type="ECO:0000255" key="1">
    <source>
        <dbReference type="HAMAP-Rule" id="MF_00435"/>
    </source>
</evidence>
<evidence type="ECO:0000255" key="2">
    <source>
        <dbReference type="PROSITE-ProRule" id="PRU01197"/>
    </source>
</evidence>
<evidence type="ECO:0000255" key="3">
    <source>
        <dbReference type="PROSITE-ProRule" id="PRU01198"/>
    </source>
</evidence>
<sequence length="331" mass="36066">MKVYYEKDANLEALKGKTVAIIGYGSQGHAHAQNLRDSGISVIVGQRPGGANYALAKEHGFEPVSAAEAAAKADLIMILLPDQVQAAVYEAEIKPNLKAGDALLFAHGFNIHFGQIEPPKDVDVFMIAPKGPGHLVRRTYTEGGGVPCLVAVHQDATGKAMEKALAYAKGVGGSRSGVIETTFREETETDLFGEQAVLCGGLSSLIKAGFETLVEAGYQPEIAYFECLHEVKLIVDLIYEGGLERMRYSISDTAEYGDYVTGKRIVTEETKKEMKKVLRDIQDGTFARNFILEAKAGYPGFKATRRLEAEHQIEKVGGELRGMMPWLKKKV</sequence>
<name>ILVC_NITV4</name>
<keyword id="KW-0028">Amino-acid biosynthesis</keyword>
<keyword id="KW-0100">Branched-chain amino acid biosynthesis</keyword>
<keyword id="KW-0460">Magnesium</keyword>
<keyword id="KW-0479">Metal-binding</keyword>
<keyword id="KW-0521">NADP</keyword>
<keyword id="KW-0560">Oxidoreductase</keyword>
<dbReference type="EC" id="1.1.1.86" evidence="1"/>
<dbReference type="EMBL" id="CP000527">
    <property type="protein sequence ID" value="ABM28707.1"/>
    <property type="molecule type" value="Genomic_DNA"/>
</dbReference>
<dbReference type="RefSeq" id="WP_010938673.1">
    <property type="nucleotide sequence ID" value="NC_008751.1"/>
</dbReference>
<dbReference type="SMR" id="A1VE41"/>
<dbReference type="KEGG" id="dvl:Dvul_1690"/>
<dbReference type="HOGENOM" id="CLU_033821_0_1_7"/>
<dbReference type="UniPathway" id="UPA00047">
    <property type="reaction ID" value="UER00056"/>
</dbReference>
<dbReference type="UniPathway" id="UPA00049">
    <property type="reaction ID" value="UER00060"/>
</dbReference>
<dbReference type="Proteomes" id="UP000009173">
    <property type="component" value="Chromosome"/>
</dbReference>
<dbReference type="GO" id="GO:0005829">
    <property type="term" value="C:cytosol"/>
    <property type="evidence" value="ECO:0007669"/>
    <property type="project" value="TreeGrafter"/>
</dbReference>
<dbReference type="GO" id="GO:0004455">
    <property type="term" value="F:ketol-acid reductoisomerase activity"/>
    <property type="evidence" value="ECO:0007669"/>
    <property type="project" value="UniProtKB-UniRule"/>
</dbReference>
<dbReference type="GO" id="GO:0000287">
    <property type="term" value="F:magnesium ion binding"/>
    <property type="evidence" value="ECO:0007669"/>
    <property type="project" value="UniProtKB-UniRule"/>
</dbReference>
<dbReference type="GO" id="GO:0050661">
    <property type="term" value="F:NADP binding"/>
    <property type="evidence" value="ECO:0007669"/>
    <property type="project" value="InterPro"/>
</dbReference>
<dbReference type="GO" id="GO:0009097">
    <property type="term" value="P:isoleucine biosynthetic process"/>
    <property type="evidence" value="ECO:0007669"/>
    <property type="project" value="UniProtKB-UniRule"/>
</dbReference>
<dbReference type="GO" id="GO:0009099">
    <property type="term" value="P:L-valine biosynthetic process"/>
    <property type="evidence" value="ECO:0007669"/>
    <property type="project" value="UniProtKB-UniRule"/>
</dbReference>
<dbReference type="FunFam" id="3.40.50.720:FF:000023">
    <property type="entry name" value="Ketol-acid reductoisomerase (NADP(+))"/>
    <property type="match status" value="1"/>
</dbReference>
<dbReference type="Gene3D" id="6.10.240.10">
    <property type="match status" value="1"/>
</dbReference>
<dbReference type="Gene3D" id="3.40.50.720">
    <property type="entry name" value="NAD(P)-binding Rossmann-like Domain"/>
    <property type="match status" value="1"/>
</dbReference>
<dbReference type="HAMAP" id="MF_00435">
    <property type="entry name" value="IlvC"/>
    <property type="match status" value="1"/>
</dbReference>
<dbReference type="InterPro" id="IPR008927">
    <property type="entry name" value="6-PGluconate_DH-like_C_sf"/>
</dbReference>
<dbReference type="InterPro" id="IPR013023">
    <property type="entry name" value="KARI"/>
</dbReference>
<dbReference type="InterPro" id="IPR000506">
    <property type="entry name" value="KARI_C"/>
</dbReference>
<dbReference type="InterPro" id="IPR013116">
    <property type="entry name" value="KARI_N"/>
</dbReference>
<dbReference type="InterPro" id="IPR014359">
    <property type="entry name" value="KARI_prok"/>
</dbReference>
<dbReference type="InterPro" id="IPR036291">
    <property type="entry name" value="NAD(P)-bd_dom_sf"/>
</dbReference>
<dbReference type="NCBIfam" id="TIGR00465">
    <property type="entry name" value="ilvC"/>
    <property type="match status" value="1"/>
</dbReference>
<dbReference type="NCBIfam" id="NF004017">
    <property type="entry name" value="PRK05479.1"/>
    <property type="match status" value="1"/>
</dbReference>
<dbReference type="NCBIfam" id="NF009940">
    <property type="entry name" value="PRK13403.1"/>
    <property type="match status" value="1"/>
</dbReference>
<dbReference type="PANTHER" id="PTHR21371">
    <property type="entry name" value="KETOL-ACID REDUCTOISOMERASE, MITOCHONDRIAL"/>
    <property type="match status" value="1"/>
</dbReference>
<dbReference type="PANTHER" id="PTHR21371:SF1">
    <property type="entry name" value="KETOL-ACID REDUCTOISOMERASE, MITOCHONDRIAL"/>
    <property type="match status" value="1"/>
</dbReference>
<dbReference type="Pfam" id="PF01450">
    <property type="entry name" value="KARI_C"/>
    <property type="match status" value="1"/>
</dbReference>
<dbReference type="Pfam" id="PF07991">
    <property type="entry name" value="KARI_N"/>
    <property type="match status" value="1"/>
</dbReference>
<dbReference type="PIRSF" id="PIRSF000116">
    <property type="entry name" value="IlvC_gammaproteo"/>
    <property type="match status" value="1"/>
</dbReference>
<dbReference type="SUPFAM" id="SSF48179">
    <property type="entry name" value="6-phosphogluconate dehydrogenase C-terminal domain-like"/>
    <property type="match status" value="1"/>
</dbReference>
<dbReference type="SUPFAM" id="SSF51735">
    <property type="entry name" value="NAD(P)-binding Rossmann-fold domains"/>
    <property type="match status" value="1"/>
</dbReference>
<dbReference type="PROSITE" id="PS51851">
    <property type="entry name" value="KARI_C"/>
    <property type="match status" value="1"/>
</dbReference>
<dbReference type="PROSITE" id="PS51850">
    <property type="entry name" value="KARI_N"/>
    <property type="match status" value="1"/>
</dbReference>
<protein>
    <recommendedName>
        <fullName evidence="1">Ketol-acid reductoisomerase (NADP(+))</fullName>
        <shortName evidence="1">KARI</shortName>
        <ecNumber evidence="1">1.1.1.86</ecNumber>
    </recommendedName>
    <alternativeName>
        <fullName evidence="1">Acetohydroxy-acid isomeroreductase</fullName>
        <shortName evidence="1">AHIR</shortName>
    </alternativeName>
    <alternativeName>
        <fullName evidence="1">Alpha-keto-beta-hydroxylacyl reductoisomerase</fullName>
    </alternativeName>
    <alternativeName>
        <fullName evidence="1">Ketol-acid reductoisomerase type 1</fullName>
    </alternativeName>
    <alternativeName>
        <fullName evidence="1">Ketol-acid reductoisomerase type I</fullName>
    </alternativeName>
</protein>
<organism>
    <name type="scientific">Nitratidesulfovibrio vulgaris (strain DP4)</name>
    <name type="common">Desulfovibrio vulgaris</name>
    <dbReference type="NCBI Taxonomy" id="391774"/>
    <lineage>
        <taxon>Bacteria</taxon>
        <taxon>Pseudomonadati</taxon>
        <taxon>Thermodesulfobacteriota</taxon>
        <taxon>Desulfovibrionia</taxon>
        <taxon>Desulfovibrionales</taxon>
        <taxon>Desulfovibrionaceae</taxon>
        <taxon>Nitratidesulfovibrio</taxon>
    </lineage>
</organism>